<protein>
    <recommendedName>
        <fullName evidence="1">Putrescine aminotransferase</fullName>
        <shortName evidence="1">PAT</shortName>
        <shortName evidence="1">PATase</shortName>
        <ecNumber evidence="1">2.6.1.82</ecNumber>
    </recommendedName>
    <alternativeName>
        <fullName evidence="1">Cadaverine transaminase</fullName>
    </alternativeName>
    <alternativeName>
        <fullName evidence="1">Diamine transaminase</fullName>
        <ecNumber evidence="1">2.6.1.29</ecNumber>
    </alternativeName>
    <alternativeName>
        <fullName evidence="1">Putrescine transaminase</fullName>
    </alternativeName>
    <alternativeName>
        <fullName evidence="1">Putrescine--2-oxoglutaric acid transaminase</fullName>
    </alternativeName>
</protein>
<keyword id="KW-0032">Aminotransferase</keyword>
<keyword id="KW-0663">Pyridoxal phosphate</keyword>
<keyword id="KW-0808">Transferase</keyword>
<evidence type="ECO:0000255" key="1">
    <source>
        <dbReference type="HAMAP-Rule" id="MF_01276"/>
    </source>
</evidence>
<organism>
    <name type="scientific">Salmonella heidelberg (strain SL476)</name>
    <dbReference type="NCBI Taxonomy" id="454169"/>
    <lineage>
        <taxon>Bacteria</taxon>
        <taxon>Pseudomonadati</taxon>
        <taxon>Pseudomonadota</taxon>
        <taxon>Gammaproteobacteria</taxon>
        <taxon>Enterobacterales</taxon>
        <taxon>Enterobacteriaceae</taxon>
        <taxon>Salmonella</taxon>
    </lineage>
</organism>
<gene>
    <name evidence="1" type="primary">patA</name>
    <name type="ordered locus">SeHA_C3513</name>
</gene>
<sequence length="459" mass="49709">MNRLPSSASALACSAHALNLIEKRTLNHEEMKALNREVIDYFKEHVNPGFLEYRKSVTAGGDYGAVEWQAGSLNTLVDTQGQEFIDCLGGFGIFNVGHRNPVVVSAVQNQLAKQPLHSQELLDPLRAMLAKTLAALTPGKLKYSFFCNSGTESVEAALKLAKAYQSPRGKFTFIATSGAFHGKSLGALSATAKSTFRRPFMPLLPGFRHVPFGNIDAMSMAFSEGKKTGDEIAAVILEPIQGEGGVILPPQGYLTEVRKLCDEFGALMILDEVQTGMGRTGKMFACEHENVQPDILCLAKALGGGVMPIGATIATEEVFSVLFDNPFLHTTTFGGNPLACAAALATINVLLEQNLPAQAEQKGDTLLDGFRQLAREYPNLVHEARGKGMLMAIEFVDNETGYRFASEMFRQRVLVAGTLNNAKTIRIEPPLTLTIELCEQVLKSARNALAAMQVSVEEV</sequence>
<comment type="function">
    <text evidence="1">Catalyzes the aminotransferase reaction from putrescine to 2-oxoglutarate, leading to glutamate and 4-aminobutanal, which spontaneously cyclizes to form 1-pyrroline. This is the first step in one of two pathways for putrescine degradation, where putrescine is converted into 4-aminobutanoate (gamma-aminobutyrate or GABA) via 4-aminobutanal. Also functions as a cadaverine transaminase in a a L-lysine degradation pathway to succinate that proceeds via cadaverine, glutarate and L-2-hydroxyglutarate.</text>
</comment>
<comment type="catalytic activity">
    <reaction evidence="1">
        <text>an alkane-alpha,omega-diamine + 2-oxoglutarate = an omega-aminoaldehyde + L-glutamate</text>
        <dbReference type="Rhea" id="RHEA:18217"/>
        <dbReference type="Rhea" id="RHEA-COMP:9766"/>
        <dbReference type="Rhea" id="RHEA-COMP:12750"/>
        <dbReference type="ChEBI" id="CHEBI:16810"/>
        <dbReference type="ChEBI" id="CHEBI:29985"/>
        <dbReference type="ChEBI" id="CHEBI:70977"/>
        <dbReference type="ChEBI" id="CHEBI:133427"/>
        <dbReference type="EC" id="2.6.1.29"/>
    </reaction>
    <physiologicalReaction direction="left-to-right" evidence="1">
        <dbReference type="Rhea" id="RHEA:18218"/>
    </physiologicalReaction>
</comment>
<comment type="catalytic activity">
    <reaction evidence="1">
        <text>putrescine + 2-oxoglutarate = 1-pyrroline + L-glutamate + H2O</text>
        <dbReference type="Rhea" id="RHEA:12268"/>
        <dbReference type="ChEBI" id="CHEBI:15377"/>
        <dbReference type="ChEBI" id="CHEBI:16810"/>
        <dbReference type="ChEBI" id="CHEBI:29985"/>
        <dbReference type="ChEBI" id="CHEBI:36781"/>
        <dbReference type="ChEBI" id="CHEBI:326268"/>
        <dbReference type="EC" id="2.6.1.82"/>
    </reaction>
    <physiologicalReaction direction="left-to-right" evidence="1">
        <dbReference type="Rhea" id="RHEA:12269"/>
    </physiologicalReaction>
</comment>
<comment type="catalytic activity">
    <reaction evidence="1">
        <text>cadaverine + 2-oxoglutarate = 5-aminopentanal + L-glutamate</text>
        <dbReference type="Rhea" id="RHEA:61624"/>
        <dbReference type="ChEBI" id="CHEBI:16810"/>
        <dbReference type="ChEBI" id="CHEBI:29985"/>
        <dbReference type="ChEBI" id="CHEBI:58384"/>
        <dbReference type="ChEBI" id="CHEBI:144896"/>
    </reaction>
    <physiologicalReaction direction="left-to-right" evidence="1">
        <dbReference type="Rhea" id="RHEA:61625"/>
    </physiologicalReaction>
</comment>
<comment type="cofactor">
    <cofactor evidence="1">
        <name>pyridoxal 5'-phosphate</name>
        <dbReference type="ChEBI" id="CHEBI:597326"/>
    </cofactor>
</comment>
<comment type="pathway">
    <text evidence="1">Amine and polyamine degradation; putrescine degradation; 4-aminobutanal from putrescine (transaminase route): step 1/1.</text>
</comment>
<comment type="similarity">
    <text evidence="1">Belongs to the class-III pyridoxal-phosphate-dependent aminotransferase family. Putrescine aminotransferase subfamily.</text>
</comment>
<proteinExistence type="inferred from homology"/>
<dbReference type="EC" id="2.6.1.82" evidence="1"/>
<dbReference type="EC" id="2.6.1.29" evidence="1"/>
<dbReference type="EMBL" id="CP001120">
    <property type="protein sequence ID" value="ACF70070.1"/>
    <property type="molecule type" value="Genomic_DNA"/>
</dbReference>
<dbReference type="SMR" id="B4TIU6"/>
<dbReference type="KEGG" id="seh:SeHA_C3513"/>
<dbReference type="HOGENOM" id="CLU_016922_10_0_6"/>
<dbReference type="UniPathway" id="UPA00188">
    <property type="reaction ID" value="UER00290"/>
</dbReference>
<dbReference type="Proteomes" id="UP000001866">
    <property type="component" value="Chromosome"/>
</dbReference>
<dbReference type="GO" id="GO:0019161">
    <property type="term" value="F:diamine transaminase activity"/>
    <property type="evidence" value="ECO:0007669"/>
    <property type="project" value="UniProtKB-EC"/>
</dbReference>
<dbReference type="GO" id="GO:0042802">
    <property type="term" value="F:identical protein binding"/>
    <property type="evidence" value="ECO:0007669"/>
    <property type="project" value="TreeGrafter"/>
</dbReference>
<dbReference type="GO" id="GO:0033094">
    <property type="term" value="F:putrescine--2-oxoglutarate transaminase activity"/>
    <property type="evidence" value="ECO:0007669"/>
    <property type="project" value="UniProtKB-UniRule"/>
</dbReference>
<dbReference type="GO" id="GO:0030170">
    <property type="term" value="F:pyridoxal phosphate binding"/>
    <property type="evidence" value="ECO:0007669"/>
    <property type="project" value="UniProtKB-UniRule"/>
</dbReference>
<dbReference type="GO" id="GO:0019477">
    <property type="term" value="P:L-lysine catabolic process"/>
    <property type="evidence" value="ECO:0007669"/>
    <property type="project" value="UniProtKB-UniRule"/>
</dbReference>
<dbReference type="GO" id="GO:0009447">
    <property type="term" value="P:putrescine catabolic process"/>
    <property type="evidence" value="ECO:0007669"/>
    <property type="project" value="UniProtKB-UniRule"/>
</dbReference>
<dbReference type="CDD" id="cd00610">
    <property type="entry name" value="OAT_like"/>
    <property type="match status" value="1"/>
</dbReference>
<dbReference type="FunFam" id="3.40.640.10:FF:000004">
    <property type="entry name" value="Acetylornithine aminotransferase"/>
    <property type="match status" value="1"/>
</dbReference>
<dbReference type="Gene3D" id="3.90.1150.10">
    <property type="entry name" value="Aspartate Aminotransferase, domain 1"/>
    <property type="match status" value="1"/>
</dbReference>
<dbReference type="Gene3D" id="3.40.640.10">
    <property type="entry name" value="Type I PLP-dependent aspartate aminotransferase-like (Major domain)"/>
    <property type="match status" value="1"/>
</dbReference>
<dbReference type="HAMAP" id="MF_01276">
    <property type="entry name" value="Putres_aminotrans_3"/>
    <property type="match status" value="1"/>
</dbReference>
<dbReference type="InterPro" id="IPR005814">
    <property type="entry name" value="Aminotrans_3"/>
</dbReference>
<dbReference type="InterPro" id="IPR049704">
    <property type="entry name" value="Aminotrans_3_PPA_site"/>
</dbReference>
<dbReference type="InterPro" id="IPR050103">
    <property type="entry name" value="Class-III_PLP-dep_AT"/>
</dbReference>
<dbReference type="InterPro" id="IPR017747">
    <property type="entry name" value="Putrescine_aminotransferase"/>
</dbReference>
<dbReference type="InterPro" id="IPR015424">
    <property type="entry name" value="PyrdxlP-dep_Trfase"/>
</dbReference>
<dbReference type="InterPro" id="IPR015421">
    <property type="entry name" value="PyrdxlP-dep_Trfase_major"/>
</dbReference>
<dbReference type="InterPro" id="IPR015422">
    <property type="entry name" value="PyrdxlP-dep_Trfase_small"/>
</dbReference>
<dbReference type="NCBIfam" id="NF008570">
    <property type="entry name" value="PRK11522.1"/>
    <property type="match status" value="1"/>
</dbReference>
<dbReference type="NCBIfam" id="TIGR03372">
    <property type="entry name" value="putres_am_tran"/>
    <property type="match status" value="1"/>
</dbReference>
<dbReference type="PANTHER" id="PTHR11986">
    <property type="entry name" value="AMINOTRANSFERASE CLASS III"/>
    <property type="match status" value="1"/>
</dbReference>
<dbReference type="PANTHER" id="PTHR11986:SF112">
    <property type="entry name" value="PUTRESCINE AMINOTRANSFERASE"/>
    <property type="match status" value="1"/>
</dbReference>
<dbReference type="Pfam" id="PF00202">
    <property type="entry name" value="Aminotran_3"/>
    <property type="match status" value="1"/>
</dbReference>
<dbReference type="PIRSF" id="PIRSF000521">
    <property type="entry name" value="Transaminase_4ab_Lys_Orn"/>
    <property type="match status" value="1"/>
</dbReference>
<dbReference type="SUPFAM" id="SSF53383">
    <property type="entry name" value="PLP-dependent transferases"/>
    <property type="match status" value="1"/>
</dbReference>
<dbReference type="PROSITE" id="PS00600">
    <property type="entry name" value="AA_TRANSFER_CLASS_3"/>
    <property type="match status" value="1"/>
</dbReference>
<reference key="1">
    <citation type="journal article" date="2011" name="J. Bacteriol.">
        <title>Comparative genomics of 28 Salmonella enterica isolates: evidence for CRISPR-mediated adaptive sublineage evolution.</title>
        <authorList>
            <person name="Fricke W.F."/>
            <person name="Mammel M.K."/>
            <person name="McDermott P.F."/>
            <person name="Tartera C."/>
            <person name="White D.G."/>
            <person name="Leclerc J.E."/>
            <person name="Ravel J."/>
            <person name="Cebula T.A."/>
        </authorList>
    </citation>
    <scope>NUCLEOTIDE SEQUENCE [LARGE SCALE GENOMIC DNA]</scope>
    <source>
        <strain>SL476</strain>
    </source>
</reference>
<accession>B4TIU6</accession>
<name>PAT_SALHS</name>
<feature type="chain" id="PRO_1000140280" description="Putrescine aminotransferase">
    <location>
        <begin position="1"/>
        <end position="459"/>
    </location>
</feature>
<feature type="binding site" description="in other chain" evidence="1">
    <location>
        <begin position="150"/>
        <end position="151"/>
    </location>
    <ligand>
        <name>pyridoxal 5'-phosphate</name>
        <dbReference type="ChEBI" id="CHEBI:597326"/>
        <note>ligand shared between dimeric partners</note>
    </ligand>
</feature>
<feature type="binding site" description="in other chain" evidence="1">
    <location>
        <position position="274"/>
    </location>
    <ligand>
        <name>pyridoxal 5'-phosphate</name>
        <dbReference type="ChEBI" id="CHEBI:597326"/>
        <note>ligand shared between dimeric partners</note>
    </ligand>
</feature>
<feature type="binding site" evidence="1">
    <location>
        <position position="332"/>
    </location>
    <ligand>
        <name>pyridoxal 5'-phosphate</name>
        <dbReference type="ChEBI" id="CHEBI:597326"/>
        <note>ligand shared between dimeric partners</note>
    </ligand>
</feature>
<feature type="modified residue" description="N6-(pyridoxal phosphate)lysine" evidence="1">
    <location>
        <position position="300"/>
    </location>
</feature>